<proteinExistence type="inferred from homology"/>
<sequence length="704" mass="75434">MAKITKTFQYGKHTVTLETGEIARQAGGAVIVKFDDTVLLVTAVAAKSAREGQDFFPLTVDYQEKFYAGGRIPGGFFKREGRATEKETLISRLIDRPIRPLFPEDYKNEVQIIATVMSMNPDIDGDIAALIGASAALSLAGTPFNGPIAAAKVGYKNGEYILNPTVTDLKDSQLELVVAGTANAVLMVESEAELLSEEVMLGAVTFGHREMQKVINIINELAVEAGTKPSDWVAPAKNDGMIAALKEAVGDQLASAFQVRDKLQRRDAISAIKKDVLGALAPRATIEGWAAGDLAKEFGELEYQTMRGSVLSTKVRIDGRALDTVRPISAKAGVLPRTHGSALFTRGETQAIVITTLGTARDGQVIDAVSGEYKENFLFHYNFPPYSVGECGRFGAPKRREIGHGRLAKRGVLAVMPSLEEFPYTIRVVSEITESNGSSSMASVCGSSLALMDAGVPIKAPVAGIAMGLVKEGNDFVVLSDILGDEDHLGDMDFKVAGTAEGVSALQMDIKIEGITEEIMKQALQQAKAGRLHILGEMAHALTTPRQELSDYAPRLLTIKIHPDKIREVIGKGGSTIQAITKETGTQIDIQDDGTIIIASVNAIAAQAAKSRIEQITSDVEPGRIYEGKVAKIMDFGAFVTILPGKDGLVHVSQISSERVEKVGDKLKEGDLVRVKVLEVDKQGRIRLSIKAVEEGEGVPASAE</sequence>
<feature type="chain" id="PRO_0000329942" description="Polyribonucleotide nucleotidyltransferase">
    <location>
        <begin position="1"/>
        <end position="704"/>
    </location>
</feature>
<feature type="domain" description="KH" evidence="1">
    <location>
        <begin position="554"/>
        <end position="613"/>
    </location>
</feature>
<feature type="domain" description="S1 motif" evidence="1">
    <location>
        <begin position="623"/>
        <end position="691"/>
    </location>
</feature>
<feature type="binding site" evidence="1">
    <location>
        <position position="487"/>
    </location>
    <ligand>
        <name>Mg(2+)</name>
        <dbReference type="ChEBI" id="CHEBI:18420"/>
    </ligand>
</feature>
<feature type="binding site" evidence="1">
    <location>
        <position position="493"/>
    </location>
    <ligand>
        <name>Mg(2+)</name>
        <dbReference type="ChEBI" id="CHEBI:18420"/>
    </ligand>
</feature>
<accession>Q5GXV3</accession>
<protein>
    <recommendedName>
        <fullName evidence="1">Polyribonucleotide nucleotidyltransferase</fullName>
        <ecNumber evidence="1">2.7.7.8</ecNumber>
    </recommendedName>
    <alternativeName>
        <fullName evidence="1">Polynucleotide phosphorylase</fullName>
        <shortName evidence="1">PNPase</shortName>
    </alternativeName>
</protein>
<comment type="function">
    <text evidence="1">Involved in mRNA degradation. Catalyzes the phosphorolysis of single-stranded polyribonucleotides processively in the 3'- to 5'-direction.</text>
</comment>
<comment type="catalytic activity">
    <reaction evidence="1">
        <text>RNA(n+1) + phosphate = RNA(n) + a ribonucleoside 5'-diphosphate</text>
        <dbReference type="Rhea" id="RHEA:22096"/>
        <dbReference type="Rhea" id="RHEA-COMP:14527"/>
        <dbReference type="Rhea" id="RHEA-COMP:17342"/>
        <dbReference type="ChEBI" id="CHEBI:43474"/>
        <dbReference type="ChEBI" id="CHEBI:57930"/>
        <dbReference type="ChEBI" id="CHEBI:140395"/>
        <dbReference type="EC" id="2.7.7.8"/>
    </reaction>
</comment>
<comment type="cofactor">
    <cofactor evidence="1">
        <name>Mg(2+)</name>
        <dbReference type="ChEBI" id="CHEBI:18420"/>
    </cofactor>
</comment>
<comment type="subunit">
    <text evidence="1">Component of the RNA degradosome, which is a multiprotein complex involved in RNA processing and mRNA degradation.</text>
</comment>
<comment type="subcellular location">
    <subcellularLocation>
        <location evidence="1">Cytoplasm</location>
    </subcellularLocation>
</comment>
<comment type="similarity">
    <text evidence="1">Belongs to the polyribonucleotide nucleotidyltransferase family.</text>
</comment>
<reference key="1">
    <citation type="journal article" date="2005" name="Nucleic Acids Res.">
        <title>The genome sequence of Xanthomonas oryzae pathovar oryzae KACC10331, the bacterial blight pathogen of rice.</title>
        <authorList>
            <person name="Lee B.-M."/>
            <person name="Park Y.-J."/>
            <person name="Park D.-S."/>
            <person name="Kang H.-W."/>
            <person name="Kim J.-G."/>
            <person name="Song E.-S."/>
            <person name="Park I.-C."/>
            <person name="Yoon U.-H."/>
            <person name="Hahn J.-H."/>
            <person name="Koo B.-S."/>
            <person name="Lee G.-B."/>
            <person name="Kim H."/>
            <person name="Park H.-S."/>
            <person name="Yoon K.-O."/>
            <person name="Kim J.-H."/>
            <person name="Jung C.-H."/>
            <person name="Koh N.-H."/>
            <person name="Seo J.-S."/>
            <person name="Go S.-J."/>
        </authorList>
    </citation>
    <scope>NUCLEOTIDE SEQUENCE [LARGE SCALE GENOMIC DNA]</scope>
    <source>
        <strain>KACC10331 / KXO85</strain>
    </source>
</reference>
<organism>
    <name type="scientific">Xanthomonas oryzae pv. oryzae (strain KACC10331 / KXO85)</name>
    <dbReference type="NCBI Taxonomy" id="291331"/>
    <lineage>
        <taxon>Bacteria</taxon>
        <taxon>Pseudomonadati</taxon>
        <taxon>Pseudomonadota</taxon>
        <taxon>Gammaproteobacteria</taxon>
        <taxon>Lysobacterales</taxon>
        <taxon>Lysobacteraceae</taxon>
        <taxon>Xanthomonas</taxon>
    </lineage>
</organism>
<keyword id="KW-0963">Cytoplasm</keyword>
<keyword id="KW-0460">Magnesium</keyword>
<keyword id="KW-0479">Metal-binding</keyword>
<keyword id="KW-0548">Nucleotidyltransferase</keyword>
<keyword id="KW-1185">Reference proteome</keyword>
<keyword id="KW-0694">RNA-binding</keyword>
<keyword id="KW-0808">Transferase</keyword>
<name>PNP_XANOR</name>
<gene>
    <name evidence="1" type="primary">pnp</name>
    <name type="ordered locus">XOO3214</name>
</gene>
<evidence type="ECO:0000255" key="1">
    <source>
        <dbReference type="HAMAP-Rule" id="MF_01595"/>
    </source>
</evidence>
<dbReference type="EC" id="2.7.7.8" evidence="1"/>
<dbReference type="EMBL" id="AE013598">
    <property type="protein sequence ID" value="AAW76468.1"/>
    <property type="molecule type" value="Genomic_DNA"/>
</dbReference>
<dbReference type="SMR" id="Q5GXV3"/>
<dbReference type="STRING" id="291331.XOO3214"/>
<dbReference type="KEGG" id="xoo:XOO3214"/>
<dbReference type="HOGENOM" id="CLU_004217_2_2_6"/>
<dbReference type="Proteomes" id="UP000006735">
    <property type="component" value="Chromosome"/>
</dbReference>
<dbReference type="GO" id="GO:0005829">
    <property type="term" value="C:cytosol"/>
    <property type="evidence" value="ECO:0007669"/>
    <property type="project" value="TreeGrafter"/>
</dbReference>
<dbReference type="GO" id="GO:0000175">
    <property type="term" value="F:3'-5'-RNA exonuclease activity"/>
    <property type="evidence" value="ECO:0007669"/>
    <property type="project" value="TreeGrafter"/>
</dbReference>
<dbReference type="GO" id="GO:0000287">
    <property type="term" value="F:magnesium ion binding"/>
    <property type="evidence" value="ECO:0007669"/>
    <property type="project" value="UniProtKB-UniRule"/>
</dbReference>
<dbReference type="GO" id="GO:0004654">
    <property type="term" value="F:polyribonucleotide nucleotidyltransferase activity"/>
    <property type="evidence" value="ECO:0007669"/>
    <property type="project" value="UniProtKB-UniRule"/>
</dbReference>
<dbReference type="GO" id="GO:0003723">
    <property type="term" value="F:RNA binding"/>
    <property type="evidence" value="ECO:0007669"/>
    <property type="project" value="UniProtKB-UniRule"/>
</dbReference>
<dbReference type="GO" id="GO:0006402">
    <property type="term" value="P:mRNA catabolic process"/>
    <property type="evidence" value="ECO:0007669"/>
    <property type="project" value="UniProtKB-UniRule"/>
</dbReference>
<dbReference type="GO" id="GO:0006396">
    <property type="term" value="P:RNA processing"/>
    <property type="evidence" value="ECO:0007669"/>
    <property type="project" value="InterPro"/>
</dbReference>
<dbReference type="CDD" id="cd02393">
    <property type="entry name" value="KH-I_PNPase"/>
    <property type="match status" value="1"/>
</dbReference>
<dbReference type="CDD" id="cd11363">
    <property type="entry name" value="RNase_PH_PNPase_1"/>
    <property type="match status" value="1"/>
</dbReference>
<dbReference type="CDD" id="cd11364">
    <property type="entry name" value="RNase_PH_PNPase_2"/>
    <property type="match status" value="1"/>
</dbReference>
<dbReference type="CDD" id="cd04472">
    <property type="entry name" value="S1_PNPase"/>
    <property type="match status" value="1"/>
</dbReference>
<dbReference type="FunFam" id="2.40.50.140:FF:000023">
    <property type="entry name" value="Polyribonucleotide nucleotidyltransferase"/>
    <property type="match status" value="1"/>
</dbReference>
<dbReference type="FunFam" id="3.30.1370.10:FF:000001">
    <property type="entry name" value="Polyribonucleotide nucleotidyltransferase"/>
    <property type="match status" value="1"/>
</dbReference>
<dbReference type="FunFam" id="3.30.230.70:FF:000001">
    <property type="entry name" value="Polyribonucleotide nucleotidyltransferase"/>
    <property type="match status" value="1"/>
</dbReference>
<dbReference type="FunFam" id="3.30.230.70:FF:000002">
    <property type="entry name" value="Polyribonucleotide nucleotidyltransferase"/>
    <property type="match status" value="1"/>
</dbReference>
<dbReference type="Gene3D" id="3.30.230.70">
    <property type="entry name" value="GHMP Kinase, N-terminal domain"/>
    <property type="match status" value="2"/>
</dbReference>
<dbReference type="Gene3D" id="3.30.1370.10">
    <property type="entry name" value="K Homology domain, type 1"/>
    <property type="match status" value="1"/>
</dbReference>
<dbReference type="Gene3D" id="2.40.50.140">
    <property type="entry name" value="Nucleic acid-binding proteins"/>
    <property type="match status" value="1"/>
</dbReference>
<dbReference type="HAMAP" id="MF_01595">
    <property type="entry name" value="PNPase"/>
    <property type="match status" value="1"/>
</dbReference>
<dbReference type="InterPro" id="IPR001247">
    <property type="entry name" value="ExoRNase_PH_dom1"/>
</dbReference>
<dbReference type="InterPro" id="IPR015847">
    <property type="entry name" value="ExoRNase_PH_dom2"/>
</dbReference>
<dbReference type="InterPro" id="IPR036345">
    <property type="entry name" value="ExoRNase_PH_dom2_sf"/>
</dbReference>
<dbReference type="InterPro" id="IPR004087">
    <property type="entry name" value="KH_dom"/>
</dbReference>
<dbReference type="InterPro" id="IPR004088">
    <property type="entry name" value="KH_dom_type_1"/>
</dbReference>
<dbReference type="InterPro" id="IPR036612">
    <property type="entry name" value="KH_dom_type_1_sf"/>
</dbReference>
<dbReference type="InterPro" id="IPR012340">
    <property type="entry name" value="NA-bd_OB-fold"/>
</dbReference>
<dbReference type="InterPro" id="IPR012162">
    <property type="entry name" value="PNPase"/>
</dbReference>
<dbReference type="InterPro" id="IPR027408">
    <property type="entry name" value="PNPase/RNase_PH_dom_sf"/>
</dbReference>
<dbReference type="InterPro" id="IPR015848">
    <property type="entry name" value="PNPase_PH_RNA-bd_bac/org-type"/>
</dbReference>
<dbReference type="InterPro" id="IPR036456">
    <property type="entry name" value="PNPase_PH_RNA-bd_sf"/>
</dbReference>
<dbReference type="InterPro" id="IPR020568">
    <property type="entry name" value="Ribosomal_Su5_D2-typ_SF"/>
</dbReference>
<dbReference type="InterPro" id="IPR003029">
    <property type="entry name" value="S1_domain"/>
</dbReference>
<dbReference type="NCBIfam" id="TIGR03591">
    <property type="entry name" value="polynuc_phos"/>
    <property type="match status" value="1"/>
</dbReference>
<dbReference type="NCBIfam" id="NF008805">
    <property type="entry name" value="PRK11824.1"/>
    <property type="match status" value="1"/>
</dbReference>
<dbReference type="PANTHER" id="PTHR11252">
    <property type="entry name" value="POLYRIBONUCLEOTIDE NUCLEOTIDYLTRANSFERASE"/>
    <property type="match status" value="1"/>
</dbReference>
<dbReference type="PANTHER" id="PTHR11252:SF0">
    <property type="entry name" value="POLYRIBONUCLEOTIDE NUCLEOTIDYLTRANSFERASE 1, MITOCHONDRIAL"/>
    <property type="match status" value="1"/>
</dbReference>
<dbReference type="Pfam" id="PF00013">
    <property type="entry name" value="KH_1"/>
    <property type="match status" value="1"/>
</dbReference>
<dbReference type="Pfam" id="PF03726">
    <property type="entry name" value="PNPase"/>
    <property type="match status" value="1"/>
</dbReference>
<dbReference type="Pfam" id="PF01138">
    <property type="entry name" value="RNase_PH"/>
    <property type="match status" value="2"/>
</dbReference>
<dbReference type="Pfam" id="PF03725">
    <property type="entry name" value="RNase_PH_C"/>
    <property type="match status" value="2"/>
</dbReference>
<dbReference type="Pfam" id="PF00575">
    <property type="entry name" value="S1"/>
    <property type="match status" value="1"/>
</dbReference>
<dbReference type="PIRSF" id="PIRSF005499">
    <property type="entry name" value="PNPase"/>
    <property type="match status" value="1"/>
</dbReference>
<dbReference type="SMART" id="SM00322">
    <property type="entry name" value="KH"/>
    <property type="match status" value="1"/>
</dbReference>
<dbReference type="SMART" id="SM00316">
    <property type="entry name" value="S1"/>
    <property type="match status" value="1"/>
</dbReference>
<dbReference type="SUPFAM" id="SSF54791">
    <property type="entry name" value="Eukaryotic type KH-domain (KH-domain type I)"/>
    <property type="match status" value="1"/>
</dbReference>
<dbReference type="SUPFAM" id="SSF50249">
    <property type="entry name" value="Nucleic acid-binding proteins"/>
    <property type="match status" value="1"/>
</dbReference>
<dbReference type="SUPFAM" id="SSF46915">
    <property type="entry name" value="Polynucleotide phosphorylase/guanosine pentaphosphate synthase (PNPase/GPSI), domain 3"/>
    <property type="match status" value="1"/>
</dbReference>
<dbReference type="SUPFAM" id="SSF55666">
    <property type="entry name" value="Ribonuclease PH domain 2-like"/>
    <property type="match status" value="2"/>
</dbReference>
<dbReference type="SUPFAM" id="SSF54211">
    <property type="entry name" value="Ribosomal protein S5 domain 2-like"/>
    <property type="match status" value="2"/>
</dbReference>
<dbReference type="PROSITE" id="PS50084">
    <property type="entry name" value="KH_TYPE_1"/>
    <property type="match status" value="1"/>
</dbReference>
<dbReference type="PROSITE" id="PS50126">
    <property type="entry name" value="S1"/>
    <property type="match status" value="1"/>
</dbReference>